<accession>Q7MHI6</accession>
<feature type="chain" id="PRO_0000171421" description="tRNA (guanine-N(7)-)-methyltransferase">
    <location>
        <begin position="1"/>
        <end position="239"/>
    </location>
</feature>
<feature type="active site" evidence="1">
    <location>
        <position position="143"/>
    </location>
</feature>
<feature type="binding site" evidence="2">
    <location>
        <position position="68"/>
    </location>
    <ligand>
        <name>S-adenosyl-L-methionine</name>
        <dbReference type="ChEBI" id="CHEBI:59789"/>
    </ligand>
</feature>
<feature type="binding site" evidence="2">
    <location>
        <position position="93"/>
    </location>
    <ligand>
        <name>S-adenosyl-L-methionine</name>
        <dbReference type="ChEBI" id="CHEBI:59789"/>
    </ligand>
</feature>
<feature type="binding site" evidence="2">
    <location>
        <position position="120"/>
    </location>
    <ligand>
        <name>S-adenosyl-L-methionine</name>
        <dbReference type="ChEBI" id="CHEBI:59789"/>
    </ligand>
</feature>
<feature type="binding site" evidence="2">
    <location>
        <position position="143"/>
    </location>
    <ligand>
        <name>S-adenosyl-L-methionine</name>
        <dbReference type="ChEBI" id="CHEBI:59789"/>
    </ligand>
</feature>
<feature type="binding site" evidence="2">
    <location>
        <position position="147"/>
    </location>
    <ligand>
        <name>substrate</name>
    </ligand>
</feature>
<feature type="binding site" evidence="2">
    <location>
        <position position="180"/>
    </location>
    <ligand>
        <name>substrate</name>
    </ligand>
</feature>
<feature type="binding site" evidence="2">
    <location>
        <begin position="217"/>
        <end position="220"/>
    </location>
    <ligand>
        <name>substrate</name>
    </ligand>
</feature>
<reference key="1">
    <citation type="journal article" date="2003" name="Genome Res.">
        <title>Comparative genome analysis of Vibrio vulnificus, a marine pathogen.</title>
        <authorList>
            <person name="Chen C.-Y."/>
            <person name="Wu K.-M."/>
            <person name="Chang Y.-C."/>
            <person name="Chang C.-H."/>
            <person name="Tsai H.-C."/>
            <person name="Liao T.-L."/>
            <person name="Liu Y.-M."/>
            <person name="Chen H.-J."/>
            <person name="Shen A.B.-T."/>
            <person name="Li J.-C."/>
            <person name="Su T.-L."/>
            <person name="Shao C.-P."/>
            <person name="Lee C.-T."/>
            <person name="Hor L.-I."/>
            <person name="Tsai S.-F."/>
        </authorList>
    </citation>
    <scope>NUCLEOTIDE SEQUENCE [LARGE SCALE GENOMIC DNA]</scope>
    <source>
        <strain>YJ016</strain>
    </source>
</reference>
<keyword id="KW-0489">Methyltransferase</keyword>
<keyword id="KW-0949">S-adenosyl-L-methionine</keyword>
<keyword id="KW-0808">Transferase</keyword>
<keyword id="KW-0819">tRNA processing</keyword>
<proteinExistence type="inferred from homology"/>
<organism>
    <name type="scientific">Vibrio vulnificus (strain YJ016)</name>
    <dbReference type="NCBI Taxonomy" id="196600"/>
    <lineage>
        <taxon>Bacteria</taxon>
        <taxon>Pseudomonadati</taxon>
        <taxon>Pseudomonadota</taxon>
        <taxon>Gammaproteobacteria</taxon>
        <taxon>Vibrionales</taxon>
        <taxon>Vibrionaceae</taxon>
        <taxon>Vibrio</taxon>
    </lineage>
</organism>
<sequence>MSEVTTNEYNEDGKLIRKIRSFVRREGRLTKGQENAMKECWPTMGIDYQKQLLDWKEVFGNDNPVVLEIGFGMGASLVEMAKNAPEKNFFGIEVHSPGVGACLSDAREAGISNLRVMCHDAVEVFEHMIPNDSLATLQLFFPDPWHKKRHHKRRIVQLEFAEMVRQKLIPNEGIFHMATDWENYAEHMIEIMNQAPGYRNIAEAGDYIPRPEERPLTKFEARGHRLGHGVWDIKFKRVS</sequence>
<dbReference type="EC" id="2.1.1.33" evidence="2"/>
<dbReference type="EMBL" id="BA000037">
    <property type="protein sequence ID" value="BAC95647.1"/>
    <property type="status" value="ALT_INIT"/>
    <property type="molecule type" value="Genomic_DNA"/>
</dbReference>
<dbReference type="RefSeq" id="WP_011079452.1">
    <property type="nucleotide sequence ID" value="NC_005139.1"/>
</dbReference>
<dbReference type="SMR" id="Q7MHI6"/>
<dbReference type="STRING" id="672.VV93_v1c25890"/>
<dbReference type="KEGG" id="vvy:VV2883"/>
<dbReference type="eggNOG" id="COG0220">
    <property type="taxonomic scope" value="Bacteria"/>
</dbReference>
<dbReference type="HOGENOM" id="CLU_050910_0_1_6"/>
<dbReference type="UniPathway" id="UPA00989"/>
<dbReference type="Proteomes" id="UP000002675">
    <property type="component" value="Chromosome I"/>
</dbReference>
<dbReference type="GO" id="GO:0043527">
    <property type="term" value="C:tRNA methyltransferase complex"/>
    <property type="evidence" value="ECO:0007669"/>
    <property type="project" value="TreeGrafter"/>
</dbReference>
<dbReference type="GO" id="GO:0008176">
    <property type="term" value="F:tRNA (guanine(46)-N7)-methyltransferase activity"/>
    <property type="evidence" value="ECO:0007669"/>
    <property type="project" value="UniProtKB-UniRule"/>
</dbReference>
<dbReference type="FunFam" id="3.40.50.150:FF:000024">
    <property type="entry name" value="tRNA (guanine-N(7)-)-methyltransferase"/>
    <property type="match status" value="1"/>
</dbReference>
<dbReference type="Gene3D" id="3.40.50.150">
    <property type="entry name" value="Vaccinia Virus protein VP39"/>
    <property type="match status" value="1"/>
</dbReference>
<dbReference type="HAMAP" id="MF_01057">
    <property type="entry name" value="tRNA_methyltr_TrmB"/>
    <property type="match status" value="1"/>
</dbReference>
<dbReference type="InterPro" id="IPR029063">
    <property type="entry name" value="SAM-dependent_MTases_sf"/>
</dbReference>
<dbReference type="InterPro" id="IPR003358">
    <property type="entry name" value="tRNA_(Gua-N-7)_MeTrfase_Trmb"/>
</dbReference>
<dbReference type="InterPro" id="IPR055361">
    <property type="entry name" value="tRNA_methyltr_TrmB_bact"/>
</dbReference>
<dbReference type="NCBIfam" id="TIGR00091">
    <property type="entry name" value="tRNA (guanosine(46)-N7)-methyltransferase TrmB"/>
    <property type="match status" value="1"/>
</dbReference>
<dbReference type="PANTHER" id="PTHR23417">
    <property type="entry name" value="3-DEOXY-D-MANNO-OCTULOSONIC-ACID TRANSFERASE/TRNA GUANINE-N 7 - -METHYLTRANSFERASE"/>
    <property type="match status" value="1"/>
</dbReference>
<dbReference type="PANTHER" id="PTHR23417:SF14">
    <property type="entry name" value="PENTACOTRIPEPTIDE-REPEAT REGION OF PRORP DOMAIN-CONTAINING PROTEIN"/>
    <property type="match status" value="1"/>
</dbReference>
<dbReference type="Pfam" id="PF02390">
    <property type="entry name" value="Methyltransf_4"/>
    <property type="match status" value="1"/>
</dbReference>
<dbReference type="SUPFAM" id="SSF53335">
    <property type="entry name" value="S-adenosyl-L-methionine-dependent methyltransferases"/>
    <property type="match status" value="1"/>
</dbReference>
<dbReference type="PROSITE" id="PS51625">
    <property type="entry name" value="SAM_MT_TRMB"/>
    <property type="match status" value="1"/>
</dbReference>
<comment type="function">
    <text evidence="2">Catalyzes the formation of N(7)-methylguanine at position 46 (m7G46) in tRNA.</text>
</comment>
<comment type="catalytic activity">
    <reaction evidence="2">
        <text>guanosine(46) in tRNA + S-adenosyl-L-methionine = N(7)-methylguanosine(46) in tRNA + S-adenosyl-L-homocysteine</text>
        <dbReference type="Rhea" id="RHEA:42708"/>
        <dbReference type="Rhea" id="RHEA-COMP:10188"/>
        <dbReference type="Rhea" id="RHEA-COMP:10189"/>
        <dbReference type="ChEBI" id="CHEBI:57856"/>
        <dbReference type="ChEBI" id="CHEBI:59789"/>
        <dbReference type="ChEBI" id="CHEBI:74269"/>
        <dbReference type="ChEBI" id="CHEBI:74480"/>
        <dbReference type="EC" id="2.1.1.33"/>
    </reaction>
</comment>
<comment type="pathway">
    <text evidence="2">tRNA modification; N(7)-methylguanine-tRNA biosynthesis.</text>
</comment>
<comment type="similarity">
    <text evidence="2">Belongs to the class I-like SAM-binding methyltransferase superfamily. TrmB family.</text>
</comment>
<comment type="sequence caution" evidence="3">
    <conflict type="erroneous initiation">
        <sequence resource="EMBL-CDS" id="BAC95647"/>
    </conflict>
</comment>
<evidence type="ECO:0000250" key="1"/>
<evidence type="ECO:0000255" key="2">
    <source>
        <dbReference type="HAMAP-Rule" id="MF_01057"/>
    </source>
</evidence>
<evidence type="ECO:0000305" key="3"/>
<name>TRMB_VIBVY</name>
<gene>
    <name evidence="2" type="primary">trmB</name>
    <name type="ordered locus">VV2883</name>
</gene>
<protein>
    <recommendedName>
        <fullName evidence="2">tRNA (guanine-N(7)-)-methyltransferase</fullName>
        <ecNumber evidence="2">2.1.1.33</ecNumber>
    </recommendedName>
    <alternativeName>
        <fullName evidence="2">tRNA (guanine(46)-N(7))-methyltransferase</fullName>
    </alternativeName>
    <alternativeName>
        <fullName evidence="2">tRNA(m7G46)-methyltransferase</fullName>
    </alternativeName>
</protein>